<gene>
    <name type="primary">mtrB</name>
    <name type="ordered locus">OB1791</name>
</gene>
<name>MTRB_OCEIH</name>
<accession>Q8EQB3</accession>
<dbReference type="EMBL" id="BA000028">
    <property type="protein sequence ID" value="BAC13747.1"/>
    <property type="molecule type" value="Genomic_DNA"/>
</dbReference>
<dbReference type="RefSeq" id="WP_011066190.1">
    <property type="nucleotide sequence ID" value="NC_004193.1"/>
</dbReference>
<dbReference type="SMR" id="Q8EQB3"/>
<dbReference type="STRING" id="221109.gene:10734031"/>
<dbReference type="KEGG" id="oih:OB1791"/>
<dbReference type="eggNOG" id="ENOG5032Z9Y">
    <property type="taxonomic scope" value="Bacteria"/>
</dbReference>
<dbReference type="HOGENOM" id="CLU_180875_0_0_9"/>
<dbReference type="OrthoDB" id="2111980at2"/>
<dbReference type="Proteomes" id="UP000000822">
    <property type="component" value="Chromosome"/>
</dbReference>
<dbReference type="GO" id="GO:0003723">
    <property type="term" value="F:RNA binding"/>
    <property type="evidence" value="ECO:0007669"/>
    <property type="project" value="UniProtKB-UniRule"/>
</dbReference>
<dbReference type="GO" id="GO:0006353">
    <property type="term" value="P:DNA-templated transcription termination"/>
    <property type="evidence" value="ECO:0007669"/>
    <property type="project" value="InterPro"/>
</dbReference>
<dbReference type="GO" id="GO:0006355">
    <property type="term" value="P:regulation of DNA-templated transcription"/>
    <property type="evidence" value="ECO:0007669"/>
    <property type="project" value="InterPro"/>
</dbReference>
<dbReference type="Gene3D" id="2.60.40.50">
    <property type="entry name" value="TRAP-like"/>
    <property type="match status" value="1"/>
</dbReference>
<dbReference type="HAMAP" id="MF_00798">
    <property type="entry name" value="Trp_attenuator"/>
    <property type="match status" value="1"/>
</dbReference>
<dbReference type="InterPro" id="IPR000824">
    <property type="entry name" value="MtrB"/>
</dbReference>
<dbReference type="InterPro" id="IPR016031">
    <property type="entry name" value="Trp_RNA-bd_attenuator-like_dom"/>
</dbReference>
<dbReference type="InterPro" id="IPR023558">
    <property type="entry name" value="Trp_RNA-bd_attenuator_dom"/>
</dbReference>
<dbReference type="NCBIfam" id="NF009724">
    <property type="entry name" value="PRK13251.1"/>
    <property type="match status" value="1"/>
</dbReference>
<dbReference type="Pfam" id="PF02081">
    <property type="entry name" value="TrpBP"/>
    <property type="match status" value="1"/>
</dbReference>
<dbReference type="PRINTS" id="PR00687">
    <property type="entry name" value="TRPRNAAP"/>
</dbReference>
<dbReference type="SUPFAM" id="SSF51219">
    <property type="entry name" value="TRAP-like"/>
    <property type="match status" value="1"/>
</dbReference>
<organism>
    <name type="scientific">Oceanobacillus iheyensis (strain DSM 14371 / CIP 107618 / JCM 11309 / KCTC 3954 / HTE831)</name>
    <dbReference type="NCBI Taxonomy" id="221109"/>
    <lineage>
        <taxon>Bacteria</taxon>
        <taxon>Bacillati</taxon>
        <taxon>Bacillota</taxon>
        <taxon>Bacilli</taxon>
        <taxon>Bacillales</taxon>
        <taxon>Bacillaceae</taxon>
        <taxon>Oceanobacillus</taxon>
    </lineage>
</organism>
<comment type="function">
    <text evidence="1">Required for transcription attenuation control in the Trp operon. This trans-acting factor seems to recognize a 10 bases nucleotide sequence in the Trp leader transcript causing transcription termination. Binds the leader RNA only in presence of L-tryptophan (By similarity).</text>
</comment>
<comment type="subunit">
    <text evidence="1">Oligomer of 11 identical subunits arranged in doughnut-like structure.</text>
</comment>
<comment type="similarity">
    <text evidence="2">Belongs to the MtrB family.</text>
</comment>
<sequence length="74" mass="8368">MTDRTDKAEYFIIKALENGVNVMGLTRGHDTRFHHTEKLDQGEVMIAQFTEHTSAIKVRGKALIQTSHGEITNE</sequence>
<protein>
    <recommendedName>
        <fullName>Transcription attenuation protein MtrB</fullName>
    </recommendedName>
    <alternativeName>
        <fullName>Trp RNA-binding attenuation protein</fullName>
        <shortName>TRAP</shortName>
    </alternativeName>
    <alternativeName>
        <fullName>Tryptophan RNA-binding attenuator protein</fullName>
    </alternativeName>
</protein>
<keyword id="KW-1185">Reference proteome</keyword>
<keyword id="KW-0694">RNA-binding</keyword>
<keyword id="KW-0804">Transcription</keyword>
<keyword id="KW-0805">Transcription regulation</keyword>
<evidence type="ECO:0000250" key="1"/>
<evidence type="ECO:0000305" key="2"/>
<feature type="chain" id="PRO_0000206029" description="Transcription attenuation protein MtrB">
    <location>
        <begin position="1"/>
        <end position="74"/>
    </location>
</feature>
<reference key="1">
    <citation type="journal article" date="2002" name="Nucleic Acids Res.">
        <title>Genome sequence of Oceanobacillus iheyensis isolated from the Iheya Ridge and its unexpected adaptive capabilities to extreme environments.</title>
        <authorList>
            <person name="Takami H."/>
            <person name="Takaki Y."/>
            <person name="Uchiyama I."/>
        </authorList>
    </citation>
    <scope>NUCLEOTIDE SEQUENCE [LARGE SCALE GENOMIC DNA]</scope>
    <source>
        <strain>DSM 14371 / CIP 107618 / JCM 11309 / KCTC 3954 / HTE831</strain>
    </source>
</reference>
<proteinExistence type="inferred from homology"/>